<organism>
    <name type="scientific">Homo sapiens</name>
    <name type="common">Human</name>
    <dbReference type="NCBI Taxonomy" id="9606"/>
    <lineage>
        <taxon>Eukaryota</taxon>
        <taxon>Metazoa</taxon>
        <taxon>Chordata</taxon>
        <taxon>Craniata</taxon>
        <taxon>Vertebrata</taxon>
        <taxon>Euteleostomi</taxon>
        <taxon>Mammalia</taxon>
        <taxon>Eutheria</taxon>
        <taxon>Euarchontoglires</taxon>
        <taxon>Primates</taxon>
        <taxon>Haplorrhini</taxon>
        <taxon>Catarrhini</taxon>
        <taxon>Hominidae</taxon>
        <taxon>Homo</taxon>
    </lineage>
</organism>
<evidence type="ECO:0000250" key="1"/>
<evidence type="ECO:0000255" key="2">
    <source>
        <dbReference type="PROSITE-ProRule" id="PRU00448"/>
    </source>
</evidence>
<evidence type="ECO:0000256" key="3">
    <source>
        <dbReference type="SAM" id="MobiDB-lite"/>
    </source>
</evidence>
<evidence type="ECO:0000269" key="4">
    <source>
    </source>
</evidence>
<evidence type="ECO:0000269" key="5">
    <source>
    </source>
</evidence>
<evidence type="ECO:0000269" key="6">
    <source>
    </source>
</evidence>
<evidence type="ECO:0000269" key="7">
    <source>
    </source>
</evidence>
<evidence type="ECO:0000305" key="8"/>
<proteinExistence type="evidence at protein level"/>
<comment type="function">
    <text evidence="5 6 7">Cell autonomous antagonist of the canonical Wnt signaling pathway. May activate a second Wnt signaling pathway that controls planar cell polarity.</text>
</comment>
<comment type="subunit">
    <text evidence="6 7">Interacts with DVL1, DVL2, DVL3 and PPP2R3A.</text>
</comment>
<comment type="interaction">
    <interactant intactId="EBI-1538217">
        <id>Q969G9</id>
    </interactant>
    <interactant intactId="EBI-3867333">
        <id>A8MQ03</id>
        <label>CYSRT1</label>
    </interactant>
    <organismsDiffer>false</organismsDiffer>
    <experiments>3</experiments>
</comment>
<comment type="interaction">
    <interactant intactId="EBI-1538217">
        <id>Q969G9</id>
    </interactant>
    <interactant intactId="EBI-739789">
        <id>Q92997</id>
        <label>DVL3</label>
    </interactant>
    <organismsDiffer>false</organismsDiffer>
    <experiments>3</experiments>
</comment>
<comment type="interaction">
    <interactant intactId="EBI-1538217">
        <id>Q969G9</id>
    </interactant>
    <interactant intactId="EBI-12012928">
        <id>P60371</id>
        <label>KRTAP10-6</label>
    </interactant>
    <organismsDiffer>false</organismsDiffer>
    <experiments>3</experiments>
</comment>
<comment type="interaction">
    <interactant intactId="EBI-1538217">
        <id>Q969G9</id>
    </interactant>
    <interactant intactId="EBI-10172290">
        <id>P60409</id>
        <label>KRTAP10-7</label>
    </interactant>
    <organismsDiffer>false</organismsDiffer>
    <experiments>5</experiments>
</comment>
<comment type="interaction">
    <interactant intactId="EBI-1538217">
        <id>Q969G9</id>
    </interactant>
    <interactant intactId="EBI-10171774">
        <id>P60410</id>
        <label>KRTAP10-8</label>
    </interactant>
    <organismsDiffer>false</organismsDiffer>
    <experiments>3</experiments>
</comment>
<comment type="interaction">
    <interactant intactId="EBI-1538217">
        <id>Q969G9</id>
    </interactant>
    <interactant intactId="EBI-10172052">
        <id>P60411</id>
        <label>KRTAP10-9</label>
    </interactant>
    <organismsDiffer>false</organismsDiffer>
    <experiments>3</experiments>
</comment>
<comment type="interaction">
    <interactant intactId="EBI-1538217">
        <id>Q969G9</id>
    </interactant>
    <interactant intactId="EBI-11953334">
        <id>P60328</id>
        <label>KRTAP12-3</label>
    </interactant>
    <organismsDiffer>false</organismsDiffer>
    <experiments>3</experiments>
</comment>
<comment type="interaction">
    <interactant intactId="EBI-1538217">
        <id>Q969G9</id>
    </interactant>
    <interactant intactId="EBI-14065470">
        <id>Q9BYR9</id>
        <label>KRTAP2-4</label>
    </interactant>
    <organismsDiffer>false</organismsDiffer>
    <experiments>3</experiments>
</comment>
<comment type="interaction">
    <interactant intactId="EBI-1538217">
        <id>Q969G9</id>
    </interactant>
    <interactant intactId="EBI-3958099">
        <id>P26371</id>
        <label>KRTAP5-9</label>
    </interactant>
    <organismsDiffer>false</organismsDiffer>
    <experiments>3</experiments>
</comment>
<comment type="interaction">
    <interactant intactId="EBI-1538217">
        <id>Q969G9</id>
    </interactant>
    <interactant intactId="EBI-11958364">
        <id>Q9BYQ0</id>
        <label>KRTAP9-8</label>
    </interactant>
    <organismsDiffer>false</organismsDiffer>
    <experiments>3</experiments>
</comment>
<comment type="interaction">
    <interactant intactId="EBI-1538217">
        <id>Q969G9</id>
    </interactant>
    <interactant intactId="EBI-724076">
        <id>Q99750</id>
        <label>MDFI</label>
    </interactant>
    <organismsDiffer>false</organismsDiffer>
    <experiments>3</experiments>
</comment>
<comment type="interaction">
    <interactant intactId="EBI-1538217">
        <id>Q969G9</id>
    </interactant>
    <interactant intactId="EBI-10288852">
        <id>Q9UBU8-2</id>
        <label>MORF4L1</label>
    </interactant>
    <organismsDiffer>false</organismsDiffer>
    <experiments>3</experiments>
</comment>
<comment type="interaction">
    <interactant intactId="EBI-1538217">
        <id>Q969G9</id>
    </interactant>
    <interactant intactId="EBI-949204">
        <id>Q06190-1</id>
        <label>PPP2R3A</label>
    </interactant>
    <organismsDiffer>false</organismsDiffer>
    <experiments>4</experiments>
</comment>
<comment type="interaction">
    <interactant intactId="EBI-1538217">
        <id>Q969G9</id>
    </interactant>
    <interactant intactId="EBI-949210">
        <id>Q06190-2</id>
        <label>PPP2R3A</label>
    </interactant>
    <organismsDiffer>false</organismsDiffer>
    <experiments>3</experiments>
</comment>
<comment type="subcellular location">
    <subcellularLocation>
        <location evidence="1">Cell membrane</location>
    </subcellularLocation>
    <subcellularLocation>
        <location evidence="1">Cytoplasm</location>
    </subcellularLocation>
</comment>
<comment type="tissue specificity">
    <text evidence="4">Expressed in colon, heart, kidney, leukocyte, liver, lung, ovary, pancreas, placenta, prostate, skeletal muscle, small intestine and spleen.</text>
</comment>
<comment type="developmental stage">
    <text evidence="4">Expressed in fetal brain, kidney, liver and lung.</text>
</comment>
<comment type="induction">
    <text evidence="5">Expression is induced by activation of the Wnt signaling pathway.</text>
</comment>
<comment type="similarity">
    <text evidence="8">Belongs to the NKD family.</text>
</comment>
<reference key="1">
    <citation type="journal article" date="2001" name="Dev. Biol.">
        <title>Vertebrate proteins related to Drosophila Naked Cuticle bind Dishevelled and antagonize Wnt signaling.</title>
        <authorList>
            <person name="Wharton K.A. Jr."/>
            <person name="Zimmermann G."/>
            <person name="Rousset R."/>
            <person name="Scott M.P."/>
        </authorList>
    </citation>
    <scope>NUCLEOTIDE SEQUENCE [MRNA]</scope>
</reference>
<reference key="2">
    <citation type="journal article" date="2001" name="Int. J. Oncol.">
        <title>Molecular cloning, gene structure, and expression analyses of NKD1 and NKD2.</title>
        <authorList>
            <person name="Katoh M."/>
        </authorList>
    </citation>
    <scope>NUCLEOTIDE SEQUENCE [MRNA]</scope>
    <scope>TISSUE SPECIFICITY</scope>
    <scope>DEVELOPMENTAL STAGE</scope>
    <source>
        <tissue>Fetus</tissue>
    </source>
</reference>
<reference key="3">
    <citation type="journal article" date="2001" name="Proc. Natl. Acad. Sci. U.S.A.">
        <title>Elevated expression of axin2 and hnkd mRNA provides evidence that Wnt/beta-catenin signaling is activated in human colon tumors.</title>
        <authorList>
            <person name="Yan D."/>
            <person name="Wiesmann M."/>
            <person name="Rohan M."/>
            <person name="Chan V."/>
            <person name="Jefferson A.B."/>
            <person name="Guo L."/>
            <person name="Sakamoto D."/>
            <person name="Caothien R.H."/>
            <person name="Fuller J.H."/>
            <person name="Reinhard C."/>
            <person name="Garcia P.D."/>
            <person name="Randazzo F.M."/>
            <person name="Escobedo J."/>
            <person name="Fantl W.J."/>
            <person name="Williams L.T."/>
        </authorList>
    </citation>
    <scope>NUCLEOTIDE SEQUENCE [MRNA]</scope>
    <scope>FUNCTION</scope>
    <scope>INDUCTION</scope>
</reference>
<reference key="4">
    <citation type="journal article" date="2004" name="Proc. Natl. Acad. Sci. U.S.A.">
        <title>Large-scale cDNA transfection screening for genes related to cancer development and progression.</title>
        <authorList>
            <person name="Wan D."/>
            <person name="Gong Y."/>
            <person name="Qin W."/>
            <person name="Zhang P."/>
            <person name="Li J."/>
            <person name="Wei L."/>
            <person name="Zhou X."/>
            <person name="Li H."/>
            <person name="Qiu X."/>
            <person name="Zhong F."/>
            <person name="He L."/>
            <person name="Yu J."/>
            <person name="Yao G."/>
            <person name="Jiang H."/>
            <person name="Qian L."/>
            <person name="Yu Y."/>
            <person name="Shu H."/>
            <person name="Chen X."/>
            <person name="Xu H."/>
            <person name="Guo M."/>
            <person name="Pan Z."/>
            <person name="Chen Y."/>
            <person name="Ge C."/>
            <person name="Yang S."/>
            <person name="Gu J."/>
        </authorList>
    </citation>
    <scope>NUCLEOTIDE SEQUENCE [LARGE SCALE MRNA]</scope>
</reference>
<reference key="5">
    <citation type="journal article" date="2004" name="Nat. Genet.">
        <title>Complete sequencing and characterization of 21,243 full-length human cDNAs.</title>
        <authorList>
            <person name="Ota T."/>
            <person name="Suzuki Y."/>
            <person name="Nishikawa T."/>
            <person name="Otsuki T."/>
            <person name="Sugiyama T."/>
            <person name="Irie R."/>
            <person name="Wakamatsu A."/>
            <person name="Hayashi K."/>
            <person name="Sato H."/>
            <person name="Nagai K."/>
            <person name="Kimura K."/>
            <person name="Makita H."/>
            <person name="Sekine M."/>
            <person name="Obayashi M."/>
            <person name="Nishi T."/>
            <person name="Shibahara T."/>
            <person name="Tanaka T."/>
            <person name="Ishii S."/>
            <person name="Yamamoto J."/>
            <person name="Saito K."/>
            <person name="Kawai Y."/>
            <person name="Isono Y."/>
            <person name="Nakamura Y."/>
            <person name="Nagahari K."/>
            <person name="Murakami K."/>
            <person name="Yasuda T."/>
            <person name="Iwayanagi T."/>
            <person name="Wagatsuma M."/>
            <person name="Shiratori A."/>
            <person name="Sudo H."/>
            <person name="Hosoiri T."/>
            <person name="Kaku Y."/>
            <person name="Kodaira H."/>
            <person name="Kondo H."/>
            <person name="Sugawara M."/>
            <person name="Takahashi M."/>
            <person name="Kanda K."/>
            <person name="Yokoi T."/>
            <person name="Furuya T."/>
            <person name="Kikkawa E."/>
            <person name="Omura Y."/>
            <person name="Abe K."/>
            <person name="Kamihara K."/>
            <person name="Katsuta N."/>
            <person name="Sato K."/>
            <person name="Tanikawa M."/>
            <person name="Yamazaki M."/>
            <person name="Ninomiya K."/>
            <person name="Ishibashi T."/>
            <person name="Yamashita H."/>
            <person name="Murakawa K."/>
            <person name="Fujimori K."/>
            <person name="Tanai H."/>
            <person name="Kimata M."/>
            <person name="Watanabe M."/>
            <person name="Hiraoka S."/>
            <person name="Chiba Y."/>
            <person name="Ishida S."/>
            <person name="Ono Y."/>
            <person name="Takiguchi S."/>
            <person name="Watanabe S."/>
            <person name="Yosida M."/>
            <person name="Hotuta T."/>
            <person name="Kusano J."/>
            <person name="Kanehori K."/>
            <person name="Takahashi-Fujii A."/>
            <person name="Hara H."/>
            <person name="Tanase T.-O."/>
            <person name="Nomura Y."/>
            <person name="Togiya S."/>
            <person name="Komai F."/>
            <person name="Hara R."/>
            <person name="Takeuchi K."/>
            <person name="Arita M."/>
            <person name="Imose N."/>
            <person name="Musashino K."/>
            <person name="Yuuki H."/>
            <person name="Oshima A."/>
            <person name="Sasaki N."/>
            <person name="Aotsuka S."/>
            <person name="Yoshikawa Y."/>
            <person name="Matsunawa H."/>
            <person name="Ichihara T."/>
            <person name="Shiohata N."/>
            <person name="Sano S."/>
            <person name="Moriya S."/>
            <person name="Momiyama H."/>
            <person name="Satoh N."/>
            <person name="Takami S."/>
            <person name="Terashima Y."/>
            <person name="Suzuki O."/>
            <person name="Nakagawa S."/>
            <person name="Senoh A."/>
            <person name="Mizoguchi H."/>
            <person name="Goto Y."/>
            <person name="Shimizu F."/>
            <person name="Wakebe H."/>
            <person name="Hishigaki H."/>
            <person name="Watanabe T."/>
            <person name="Sugiyama A."/>
            <person name="Takemoto M."/>
            <person name="Kawakami B."/>
            <person name="Yamazaki M."/>
            <person name="Watanabe K."/>
            <person name="Kumagai A."/>
            <person name="Itakura S."/>
            <person name="Fukuzumi Y."/>
            <person name="Fujimori Y."/>
            <person name="Komiyama M."/>
            <person name="Tashiro H."/>
            <person name="Tanigami A."/>
            <person name="Fujiwara T."/>
            <person name="Ono T."/>
            <person name="Yamada K."/>
            <person name="Fujii Y."/>
            <person name="Ozaki K."/>
            <person name="Hirao M."/>
            <person name="Ohmori Y."/>
            <person name="Kawabata A."/>
            <person name="Hikiji T."/>
            <person name="Kobatake N."/>
            <person name="Inagaki H."/>
            <person name="Ikema Y."/>
            <person name="Okamoto S."/>
            <person name="Okitani R."/>
            <person name="Kawakami T."/>
            <person name="Noguchi S."/>
            <person name="Itoh T."/>
            <person name="Shigeta K."/>
            <person name="Senba T."/>
            <person name="Matsumura K."/>
            <person name="Nakajima Y."/>
            <person name="Mizuno T."/>
            <person name="Morinaga M."/>
            <person name="Sasaki M."/>
            <person name="Togashi T."/>
            <person name="Oyama M."/>
            <person name="Hata H."/>
            <person name="Watanabe M."/>
            <person name="Komatsu T."/>
            <person name="Mizushima-Sugano J."/>
            <person name="Satoh T."/>
            <person name="Shirai Y."/>
            <person name="Takahashi Y."/>
            <person name="Nakagawa K."/>
            <person name="Okumura K."/>
            <person name="Nagase T."/>
            <person name="Nomura N."/>
            <person name="Kikuchi H."/>
            <person name="Masuho Y."/>
            <person name="Yamashita R."/>
            <person name="Nakai K."/>
            <person name="Yada T."/>
            <person name="Nakamura Y."/>
            <person name="Ohara O."/>
            <person name="Isogai T."/>
            <person name="Sugano S."/>
        </authorList>
    </citation>
    <scope>NUCLEOTIDE SEQUENCE [LARGE SCALE MRNA]</scope>
    <source>
        <tissue>Thalamus</tissue>
    </source>
</reference>
<reference key="6">
    <citation type="submission" date="2005-07" db="EMBL/GenBank/DDBJ databases">
        <authorList>
            <person name="Mural R.J."/>
            <person name="Istrail S."/>
            <person name="Sutton G.G."/>
            <person name="Florea L."/>
            <person name="Halpern A.L."/>
            <person name="Mobarry C.M."/>
            <person name="Lippert R."/>
            <person name="Walenz B."/>
            <person name="Shatkay H."/>
            <person name="Dew I."/>
            <person name="Miller J.R."/>
            <person name="Flanigan M.J."/>
            <person name="Edwards N.J."/>
            <person name="Bolanos R."/>
            <person name="Fasulo D."/>
            <person name="Halldorsson B.V."/>
            <person name="Hannenhalli S."/>
            <person name="Turner R."/>
            <person name="Yooseph S."/>
            <person name="Lu F."/>
            <person name="Nusskern D.R."/>
            <person name="Shue B.C."/>
            <person name="Zheng X.H."/>
            <person name="Zhong F."/>
            <person name="Delcher A.L."/>
            <person name="Huson D.H."/>
            <person name="Kravitz S.A."/>
            <person name="Mouchard L."/>
            <person name="Reinert K."/>
            <person name="Remington K.A."/>
            <person name="Clark A.G."/>
            <person name="Waterman M.S."/>
            <person name="Eichler E.E."/>
            <person name="Adams M.D."/>
            <person name="Hunkapiller M.W."/>
            <person name="Myers E.W."/>
            <person name="Venter J.C."/>
        </authorList>
    </citation>
    <scope>NUCLEOTIDE SEQUENCE [LARGE SCALE GENOMIC DNA]</scope>
</reference>
<reference key="7">
    <citation type="journal article" date="2004" name="Genome Res.">
        <title>The status, quality, and expansion of the NIH full-length cDNA project: the Mammalian Gene Collection (MGC).</title>
        <authorList>
            <consortium name="The MGC Project Team"/>
        </authorList>
    </citation>
    <scope>NUCLEOTIDE SEQUENCE [LARGE SCALE MRNA]</scope>
    <source>
        <tissue>Ovary</tissue>
    </source>
</reference>
<reference key="8">
    <citation type="journal article" date="2005" name="Genes Dev.">
        <title>PR72, a novel regulator of Wnt signaling required for Naked cuticle function.</title>
        <authorList>
            <person name="Creyghton M.P."/>
            <person name="Roeel G."/>
            <person name="Eichhorn P.J.A."/>
            <person name="Hijmans E.M."/>
            <person name="Maurer I."/>
            <person name="Destree O."/>
            <person name="Bernards R."/>
        </authorList>
    </citation>
    <scope>FUNCTION</scope>
    <scope>INTERACTION WITH PPP2R3A</scope>
</reference>
<reference key="9">
    <citation type="journal article" date="2006" name="Proc. Natl. Acad. Sci. U.S.A.">
        <title>PR130 is a modulator of the Wnt-signaling cascade that counters repression of the antagonist Naked cuticle.</title>
        <authorList>
            <person name="Creyghton M.P."/>
            <person name="Roeel G."/>
            <person name="Eichhorn P.J.A."/>
            <person name="Vredeveld L.C."/>
            <person name="Destree O."/>
            <person name="Bernards R."/>
        </authorList>
    </citation>
    <scope>FUNCTION</scope>
    <scope>INTERACTION WITH DVL1; DVL2; DVL3 AND PPP2R3A</scope>
</reference>
<keyword id="KW-0106">Calcium</keyword>
<keyword id="KW-1003">Cell membrane</keyword>
<keyword id="KW-0963">Cytoplasm</keyword>
<keyword id="KW-0449">Lipoprotein</keyword>
<keyword id="KW-0472">Membrane</keyword>
<keyword id="KW-0479">Metal-binding</keyword>
<keyword id="KW-0519">Myristate</keyword>
<keyword id="KW-1267">Proteomics identification</keyword>
<keyword id="KW-1185">Reference proteome</keyword>
<keyword id="KW-0879">Wnt signaling pathway</keyword>
<accession>Q969G9</accession>
<accession>B2RC39</accession>
<accession>Q8WZ08</accession>
<feature type="initiator methionine" description="Removed">
    <location>
        <position position="1"/>
    </location>
</feature>
<feature type="chain" id="PRO_0000301990" description="Protein naked cuticle homolog 1">
    <location>
        <begin position="2"/>
        <end position="470"/>
    </location>
</feature>
<feature type="domain" description="EF-hand" evidence="2">
    <location>
        <begin position="131"/>
        <end position="166"/>
    </location>
</feature>
<feature type="region of interest" description="Disordered" evidence="3">
    <location>
        <begin position="1"/>
        <end position="21"/>
    </location>
</feature>
<feature type="region of interest" description="Disordered" evidence="3">
    <location>
        <begin position="90"/>
        <end position="114"/>
    </location>
</feature>
<feature type="region of interest" description="Interaction with DVL1, DVL2 and DVL3" evidence="1">
    <location>
        <begin position="125"/>
        <end position="190"/>
    </location>
</feature>
<feature type="region of interest" description="Disordered" evidence="3">
    <location>
        <begin position="192"/>
        <end position="228"/>
    </location>
</feature>
<feature type="region of interest" description="Disordered" evidence="3">
    <location>
        <begin position="271"/>
        <end position="314"/>
    </location>
</feature>
<feature type="region of interest" description="Disordered" evidence="3">
    <location>
        <begin position="337"/>
        <end position="357"/>
    </location>
</feature>
<feature type="region of interest" description="Disordered" evidence="3">
    <location>
        <begin position="446"/>
        <end position="470"/>
    </location>
</feature>
<feature type="compositionally biased region" description="Basic and acidic residues" evidence="3">
    <location>
        <begin position="92"/>
        <end position="109"/>
    </location>
</feature>
<feature type="compositionally biased region" description="Polar residues" evidence="3">
    <location>
        <begin position="192"/>
        <end position="205"/>
    </location>
</feature>
<feature type="compositionally biased region" description="Basic and acidic residues" evidence="3">
    <location>
        <begin position="210"/>
        <end position="227"/>
    </location>
</feature>
<feature type="compositionally biased region" description="Polar residues" evidence="3">
    <location>
        <begin position="271"/>
        <end position="281"/>
    </location>
</feature>
<feature type="compositionally biased region" description="Basic residues" evidence="3">
    <location>
        <begin position="452"/>
        <end position="470"/>
    </location>
</feature>
<feature type="binding site" evidence="2">
    <location>
        <position position="144"/>
    </location>
    <ligand>
        <name>Ca(2+)</name>
        <dbReference type="ChEBI" id="CHEBI:29108"/>
    </ligand>
</feature>
<feature type="binding site" evidence="2">
    <location>
        <position position="146"/>
    </location>
    <ligand>
        <name>Ca(2+)</name>
        <dbReference type="ChEBI" id="CHEBI:29108"/>
    </ligand>
</feature>
<feature type="binding site" evidence="2">
    <location>
        <position position="148"/>
    </location>
    <ligand>
        <name>Ca(2+)</name>
        <dbReference type="ChEBI" id="CHEBI:29108"/>
    </ligand>
</feature>
<feature type="binding site" evidence="2">
    <location>
        <position position="150"/>
    </location>
    <ligand>
        <name>Ca(2+)</name>
        <dbReference type="ChEBI" id="CHEBI:29108"/>
    </ligand>
</feature>
<feature type="binding site" evidence="2">
    <location>
        <position position="155"/>
    </location>
    <ligand>
        <name>Ca(2+)</name>
        <dbReference type="ChEBI" id="CHEBI:29108"/>
    </ligand>
</feature>
<feature type="lipid moiety-binding region" description="N-myristoyl glycine" evidence="1">
    <location>
        <position position="2"/>
    </location>
</feature>
<feature type="sequence conflict" description="In Ref. 4; AAL55768." evidence="8" ref="4">
    <original>AA</original>
    <variation>VD</variation>
    <location>
        <begin position="9"/>
        <end position="10"/>
    </location>
</feature>
<sequence>MGKLHSKPAAVCKRRESPEGDSFAVSAAWARKGIEEWIGRQRCPGGVSGPRQLRLAGTIGRSTRELVGDVLRDTLSEEEEDDFRLEVALPPEKTDGLGSGDEKKMERVSEPCPGSKKQLKFEELQCDVSMEEDSRQEWTFTLYDFDNNGKVTREDITSLLHTIYEVVDSSVNHSPTSSKMLRVKLTVAPDGSQSKRSVLVNQADLQSARPRAETKPTEDLRSWEKKQRAPLRFQGDSRLEQSGCYHHCVDENIERRNHYLDLAGIENYTSQFGPGSPSVAQKSELPPRTSNPTRSRSHEPEAIHIPHRKPQGVDPASFHFLDTPIAKVSELQQRLRGTQDGSKHFVRSPKAQGKSVGVGHVARGARNKPPLGPAIPAVSPSAHLAASPALLPSLAPLGHKKHKHRAKESQQGCRGLQAPLASGGPVLGREHLRELPALVVYESQAGQPVQRHEHHHHHEHHHHYHHFYQT</sequence>
<gene>
    <name type="primary">NKD1</name>
    <name type="synonym">NKD</name>
    <name type="ORF">PP7246</name>
</gene>
<name>NKD1_HUMAN</name>
<protein>
    <recommendedName>
        <fullName>Protein naked cuticle homolog 1</fullName>
        <shortName>Naked-1</shortName>
        <shortName>hNkd</shortName>
        <shortName>hNkd1</shortName>
    </recommendedName>
</protein>
<dbReference type="EMBL" id="AF358135">
    <property type="protein sequence ID" value="AAK57484.1"/>
    <property type="molecule type" value="mRNA"/>
</dbReference>
<dbReference type="EMBL" id="AB062886">
    <property type="protein sequence ID" value="BAB70500.1"/>
    <property type="molecule type" value="mRNA"/>
</dbReference>
<dbReference type="EMBL" id="AY061883">
    <property type="protein sequence ID" value="AAL32374.1"/>
    <property type="molecule type" value="mRNA"/>
</dbReference>
<dbReference type="EMBL" id="AF289584">
    <property type="protein sequence ID" value="AAL55768.1"/>
    <property type="molecule type" value="mRNA"/>
</dbReference>
<dbReference type="EMBL" id="AK314930">
    <property type="protein sequence ID" value="BAG37436.1"/>
    <property type="molecule type" value="mRNA"/>
</dbReference>
<dbReference type="EMBL" id="CH471092">
    <property type="protein sequence ID" value="EAW82761.1"/>
    <property type="molecule type" value="Genomic_DNA"/>
</dbReference>
<dbReference type="EMBL" id="BC051288">
    <property type="protein sequence ID" value="AAH51288.1"/>
    <property type="molecule type" value="mRNA"/>
</dbReference>
<dbReference type="CCDS" id="CCDS10743.1"/>
<dbReference type="RefSeq" id="NP_149110.1">
    <property type="nucleotide sequence ID" value="NM_033119.5"/>
</dbReference>
<dbReference type="BioGRID" id="124516">
    <property type="interactions" value="20"/>
</dbReference>
<dbReference type="DIP" id="DIP-38248N"/>
<dbReference type="FunCoup" id="Q969G9">
    <property type="interactions" value="289"/>
</dbReference>
<dbReference type="IntAct" id="Q969G9">
    <property type="interactions" value="16"/>
</dbReference>
<dbReference type="STRING" id="9606.ENSP00000268459"/>
<dbReference type="iPTMnet" id="Q969G9"/>
<dbReference type="PhosphoSitePlus" id="Q969G9"/>
<dbReference type="BioMuta" id="NKD1"/>
<dbReference type="DMDM" id="74731040"/>
<dbReference type="jPOST" id="Q969G9"/>
<dbReference type="MassIVE" id="Q969G9"/>
<dbReference type="PaxDb" id="9606-ENSP00000268459"/>
<dbReference type="PeptideAtlas" id="Q969G9"/>
<dbReference type="ProteomicsDB" id="75758"/>
<dbReference type="Antibodypedia" id="14551">
    <property type="antibodies" value="150 antibodies from 25 providers"/>
</dbReference>
<dbReference type="DNASU" id="85407"/>
<dbReference type="Ensembl" id="ENST00000268459.6">
    <property type="protein sequence ID" value="ENSP00000268459.3"/>
    <property type="gene ID" value="ENSG00000140807.7"/>
</dbReference>
<dbReference type="GeneID" id="85407"/>
<dbReference type="KEGG" id="hsa:85407"/>
<dbReference type="MANE-Select" id="ENST00000268459.6">
    <property type="protein sequence ID" value="ENSP00000268459.3"/>
    <property type="RefSeq nucleotide sequence ID" value="NM_033119.5"/>
    <property type="RefSeq protein sequence ID" value="NP_149110.1"/>
</dbReference>
<dbReference type="UCSC" id="uc002egg.3">
    <property type="organism name" value="human"/>
</dbReference>
<dbReference type="AGR" id="HGNC:17045"/>
<dbReference type="CTD" id="85407"/>
<dbReference type="DisGeNET" id="85407"/>
<dbReference type="GeneCards" id="NKD1"/>
<dbReference type="HGNC" id="HGNC:17045">
    <property type="gene designation" value="NKD1"/>
</dbReference>
<dbReference type="HPA" id="ENSG00000140807">
    <property type="expression patterns" value="Low tissue specificity"/>
</dbReference>
<dbReference type="MIM" id="607851">
    <property type="type" value="gene"/>
</dbReference>
<dbReference type="neXtProt" id="NX_Q969G9"/>
<dbReference type="OpenTargets" id="ENSG00000140807"/>
<dbReference type="PharmGKB" id="PA31637"/>
<dbReference type="VEuPathDB" id="HostDB:ENSG00000140807"/>
<dbReference type="eggNOG" id="ENOG502QT1X">
    <property type="taxonomic scope" value="Eukaryota"/>
</dbReference>
<dbReference type="GeneTree" id="ENSGT00440000033589"/>
<dbReference type="HOGENOM" id="CLU_035610_1_1_1"/>
<dbReference type="InParanoid" id="Q969G9"/>
<dbReference type="OMA" id="XELQCDV"/>
<dbReference type="OrthoDB" id="5953812at2759"/>
<dbReference type="PAN-GO" id="Q969G9">
    <property type="GO annotations" value="2 GO annotations based on evolutionary models"/>
</dbReference>
<dbReference type="PhylomeDB" id="Q969G9"/>
<dbReference type="TreeFam" id="TF328786"/>
<dbReference type="PathwayCommons" id="Q969G9"/>
<dbReference type="SignaLink" id="Q969G9"/>
<dbReference type="SIGNOR" id="Q969G9"/>
<dbReference type="BioGRID-ORCS" id="85407">
    <property type="hits" value="12 hits in 1138 CRISPR screens"/>
</dbReference>
<dbReference type="ChiTaRS" id="NKD1">
    <property type="organism name" value="human"/>
</dbReference>
<dbReference type="GenomeRNAi" id="85407"/>
<dbReference type="Pharos" id="Q969G9">
    <property type="development level" value="Tbio"/>
</dbReference>
<dbReference type="PRO" id="PR:Q969G9"/>
<dbReference type="Proteomes" id="UP000005640">
    <property type="component" value="Chromosome 16"/>
</dbReference>
<dbReference type="RNAct" id="Q969G9">
    <property type="molecule type" value="protein"/>
</dbReference>
<dbReference type="Bgee" id="ENSG00000140807">
    <property type="expression patterns" value="Expressed in right lung and 139 other cell types or tissues"/>
</dbReference>
<dbReference type="GO" id="GO:0005737">
    <property type="term" value="C:cytoplasm"/>
    <property type="evidence" value="ECO:0000318"/>
    <property type="project" value="GO_Central"/>
</dbReference>
<dbReference type="GO" id="GO:0005886">
    <property type="term" value="C:plasma membrane"/>
    <property type="evidence" value="ECO:0007669"/>
    <property type="project" value="UniProtKB-SubCell"/>
</dbReference>
<dbReference type="GO" id="GO:0000159">
    <property type="term" value="C:protein phosphatase type 2A complex"/>
    <property type="evidence" value="ECO:0000314"/>
    <property type="project" value="BHF-UCL"/>
</dbReference>
<dbReference type="GO" id="GO:0005509">
    <property type="term" value="F:calcium ion binding"/>
    <property type="evidence" value="ECO:0007669"/>
    <property type="project" value="InterPro"/>
</dbReference>
<dbReference type="GO" id="GO:0030165">
    <property type="term" value="F:PDZ domain binding"/>
    <property type="evidence" value="ECO:0007669"/>
    <property type="project" value="Ensembl"/>
</dbReference>
<dbReference type="GO" id="GO:0003401">
    <property type="term" value="P:axis elongation"/>
    <property type="evidence" value="ECO:0000250"/>
    <property type="project" value="BHF-UCL"/>
</dbReference>
<dbReference type="GO" id="GO:0060026">
    <property type="term" value="P:convergent extension"/>
    <property type="evidence" value="ECO:0007669"/>
    <property type="project" value="Ensembl"/>
</dbReference>
<dbReference type="GO" id="GO:0001754">
    <property type="term" value="P:eye photoreceptor cell differentiation"/>
    <property type="evidence" value="ECO:0000250"/>
    <property type="project" value="BHF-UCL"/>
</dbReference>
<dbReference type="GO" id="GO:0090090">
    <property type="term" value="P:negative regulation of canonical Wnt signaling pathway"/>
    <property type="evidence" value="ECO:0000315"/>
    <property type="project" value="BHF-UCL"/>
</dbReference>
<dbReference type="GO" id="GO:0030178">
    <property type="term" value="P:negative regulation of Wnt signaling pathway"/>
    <property type="evidence" value="ECO:0000318"/>
    <property type="project" value="GO_Central"/>
</dbReference>
<dbReference type="GO" id="GO:0043410">
    <property type="term" value="P:positive regulation of MAPK cascade"/>
    <property type="evidence" value="ECO:0007669"/>
    <property type="project" value="Ensembl"/>
</dbReference>
<dbReference type="GO" id="GO:2000052">
    <property type="term" value="P:positive regulation of non-canonical Wnt signaling pathway"/>
    <property type="evidence" value="ECO:0000250"/>
    <property type="project" value="BHF-UCL"/>
</dbReference>
<dbReference type="GO" id="GO:0045732">
    <property type="term" value="P:positive regulation of protein catabolic process"/>
    <property type="evidence" value="ECO:0000315"/>
    <property type="project" value="BHF-UCL"/>
</dbReference>
<dbReference type="GO" id="GO:2000096">
    <property type="term" value="P:positive regulation of Wnt signaling pathway, planar cell polarity pathway"/>
    <property type="evidence" value="ECO:0000250"/>
    <property type="project" value="BHF-UCL"/>
</dbReference>
<dbReference type="GO" id="GO:0090249">
    <property type="term" value="P:regulation of cell migration involved in somitogenic axis elongation"/>
    <property type="evidence" value="ECO:0000250"/>
    <property type="project" value="BHF-UCL"/>
</dbReference>
<dbReference type="GO" id="GO:0007525">
    <property type="term" value="P:somatic muscle development"/>
    <property type="evidence" value="ECO:0000250"/>
    <property type="project" value="BHF-UCL"/>
</dbReference>
<dbReference type="GO" id="GO:0016055">
    <property type="term" value="P:Wnt signaling pathway"/>
    <property type="evidence" value="ECO:0007669"/>
    <property type="project" value="UniProtKB-KW"/>
</dbReference>
<dbReference type="FunFam" id="1.10.238.10:FF:000166">
    <property type="entry name" value="Naked cuticle homolog 1 (Drosophila)"/>
    <property type="match status" value="1"/>
</dbReference>
<dbReference type="Gene3D" id="1.10.238.10">
    <property type="entry name" value="EF-hand"/>
    <property type="match status" value="1"/>
</dbReference>
<dbReference type="InterPro" id="IPR011992">
    <property type="entry name" value="EF-hand-dom_pair"/>
</dbReference>
<dbReference type="InterPro" id="IPR018247">
    <property type="entry name" value="EF_Hand_1_Ca_BS"/>
</dbReference>
<dbReference type="InterPro" id="IPR002048">
    <property type="entry name" value="EF_hand_dom"/>
</dbReference>
<dbReference type="InterPro" id="IPR040140">
    <property type="entry name" value="Nkd-like"/>
</dbReference>
<dbReference type="PANTHER" id="PTHR22611">
    <property type="entry name" value="PROTEIN NAKED CUTICLE"/>
    <property type="match status" value="1"/>
</dbReference>
<dbReference type="PANTHER" id="PTHR22611:SF2">
    <property type="entry name" value="PROTEIN NAKED CUTICLE HOMOLOG 1"/>
    <property type="match status" value="1"/>
</dbReference>
<dbReference type="SUPFAM" id="SSF47473">
    <property type="entry name" value="EF-hand"/>
    <property type="match status" value="1"/>
</dbReference>
<dbReference type="PROSITE" id="PS00018">
    <property type="entry name" value="EF_HAND_1"/>
    <property type="match status" value="1"/>
</dbReference>
<dbReference type="PROSITE" id="PS50222">
    <property type="entry name" value="EF_HAND_2"/>
    <property type="match status" value="1"/>
</dbReference>